<gene>
    <name type="primary">FAM187B</name>
    <name type="synonym">TMEM162</name>
</gene>
<feature type="signal peptide" evidence="1">
    <location>
        <begin position="1"/>
        <end position="17"/>
    </location>
</feature>
<feature type="chain" id="PRO_0000284626" description="Protein FAM187B">
    <location>
        <begin position="18"/>
        <end position="369"/>
    </location>
</feature>
<feature type="topological domain" description="Extracellular" evidence="1">
    <location>
        <begin position="18"/>
        <end position="335"/>
    </location>
</feature>
<feature type="transmembrane region" description="Helical" evidence="1">
    <location>
        <begin position="336"/>
        <end position="356"/>
    </location>
</feature>
<feature type="topological domain" description="Cytoplasmic" evidence="1">
    <location>
        <begin position="357"/>
        <end position="369"/>
    </location>
</feature>
<feature type="glycosylation site" description="N-linked (GlcNAc...) asparagine" evidence="1">
    <location>
        <position position="45"/>
    </location>
</feature>
<feature type="glycosylation site" description="N-linked (GlcNAc...) asparagine" evidence="1">
    <location>
        <position position="68"/>
    </location>
</feature>
<feature type="glycosylation site" description="N-linked (GlcNAc...) asparagine" evidence="1">
    <location>
        <position position="130"/>
    </location>
</feature>
<feature type="sequence variant" id="VAR_031790" description="In dbSNP:rs34873156." evidence="3">
    <original>P</original>
    <variation>S</variation>
    <location>
        <position position="3"/>
    </location>
</feature>
<feature type="sequence variant" id="VAR_031791" description="In dbSNP:rs565791." evidence="2">
    <original>C</original>
    <variation>R</variation>
    <location>
        <position position="160"/>
    </location>
</feature>
<feature type="sequence variant" id="VAR_031792" description="In dbSNP:rs564117.">
    <original>V</original>
    <variation>I</variation>
    <location>
        <position position="216"/>
    </location>
</feature>
<accession>Q17R55</accession>
<accession>Q8N7G6</accession>
<proteinExistence type="evidence at protein level"/>
<sequence>MPPMLWLLLHFAAPALGFYFSISCPSGKQCQQALLSGNDILLYCNSSGAHWYYLFTQGKKGRLTSLTNISNMEIMPEGSLLIKDPLPSQTGLYHCWNKNGRQVVQYEIDFQDVTTLHITHKDLGQRPLQNETLHLGSKQLIFTWWEPWQDCNRCEEPGECKRLGYRYIEEPLEEAMPCWLYLGEVLVWSSRLRPELQVEACHVQCTNNTQLRVDYVIFDNFRLDEKTEFVWLDCPLGSMYRPVNWRANDTPLTWESQLSGQDFTTFLDPSTGGRQLQVFQPAVYKCFVQQELVAQFKPAASLETLEAQWRENDAQWREARKALRGRADSVLKGLKLVLLVVTVLALLGALLKCIHPSPGRRSTQVLVVK</sequence>
<keyword id="KW-0325">Glycoprotein</keyword>
<keyword id="KW-0472">Membrane</keyword>
<keyword id="KW-1267">Proteomics identification</keyword>
<keyword id="KW-1185">Reference proteome</keyword>
<keyword id="KW-0732">Signal</keyword>
<keyword id="KW-0812">Transmembrane</keyword>
<keyword id="KW-1133">Transmembrane helix</keyword>
<dbReference type="EMBL" id="AK098526">
    <property type="protein sequence ID" value="BAC05322.1"/>
    <property type="molecule type" value="mRNA"/>
</dbReference>
<dbReference type="EMBL" id="BC117457">
    <property type="protein sequence ID" value="AAI17458.1"/>
    <property type="molecule type" value="mRNA"/>
</dbReference>
<dbReference type="EMBL" id="BC117459">
    <property type="protein sequence ID" value="AAI17460.1"/>
    <property type="molecule type" value="mRNA"/>
</dbReference>
<dbReference type="CCDS" id="CCDS12448.1"/>
<dbReference type="RefSeq" id="NP_689694.1">
    <property type="nucleotide sequence ID" value="NM_152481.2"/>
</dbReference>
<dbReference type="BioGRID" id="127118">
    <property type="interactions" value="60"/>
</dbReference>
<dbReference type="FunCoup" id="Q17R55">
    <property type="interactions" value="9"/>
</dbReference>
<dbReference type="IntAct" id="Q17R55">
    <property type="interactions" value="12"/>
</dbReference>
<dbReference type="STRING" id="9606.ENSP00000323355"/>
<dbReference type="GlyCosmos" id="Q17R55">
    <property type="glycosylation" value="3 sites, No reported glycans"/>
</dbReference>
<dbReference type="GlyGen" id="Q17R55">
    <property type="glycosylation" value="3 sites, 2 N-linked glycans (1 site)"/>
</dbReference>
<dbReference type="iPTMnet" id="Q17R55"/>
<dbReference type="PhosphoSitePlus" id="Q17R55"/>
<dbReference type="BioMuta" id="FAM187B"/>
<dbReference type="DMDM" id="145566967"/>
<dbReference type="MassIVE" id="Q17R55"/>
<dbReference type="PaxDb" id="9606-ENSP00000323355"/>
<dbReference type="PeptideAtlas" id="Q17R55"/>
<dbReference type="ProteomicsDB" id="61135"/>
<dbReference type="Antibodypedia" id="3047">
    <property type="antibodies" value="41 antibodies from 11 providers"/>
</dbReference>
<dbReference type="DNASU" id="148109"/>
<dbReference type="Ensembl" id="ENST00000324675.4">
    <property type="protein sequence ID" value="ENSP00000323355.3"/>
    <property type="gene ID" value="ENSG00000177558.4"/>
</dbReference>
<dbReference type="GeneID" id="148109"/>
<dbReference type="KEGG" id="hsa:148109"/>
<dbReference type="MANE-Select" id="ENST00000324675.4">
    <property type="protein sequence ID" value="ENSP00000323355.3"/>
    <property type="RefSeq nucleotide sequence ID" value="NM_152481.2"/>
    <property type="RefSeq protein sequence ID" value="NP_689694.1"/>
</dbReference>
<dbReference type="UCSC" id="uc002nyk.2">
    <property type="organism name" value="human"/>
</dbReference>
<dbReference type="AGR" id="HGNC:26366"/>
<dbReference type="CTD" id="148109"/>
<dbReference type="GeneCards" id="FAM187B"/>
<dbReference type="HGNC" id="HGNC:26366">
    <property type="gene designation" value="FAM187B"/>
</dbReference>
<dbReference type="HPA" id="ENSG00000177558">
    <property type="expression patterns" value="Tissue enriched (testis)"/>
</dbReference>
<dbReference type="neXtProt" id="NX_Q17R55"/>
<dbReference type="OpenTargets" id="ENSG00000177558"/>
<dbReference type="PharmGKB" id="PA164719910"/>
<dbReference type="VEuPathDB" id="HostDB:ENSG00000177558"/>
<dbReference type="eggNOG" id="ENOG502S0YJ">
    <property type="taxonomic scope" value="Eukaryota"/>
</dbReference>
<dbReference type="GeneTree" id="ENSGT00530000063991"/>
<dbReference type="HOGENOM" id="CLU_054403_0_0_1"/>
<dbReference type="InParanoid" id="Q17R55"/>
<dbReference type="OMA" id="EACHVQC"/>
<dbReference type="OrthoDB" id="6434091at2759"/>
<dbReference type="PAN-GO" id="Q17R55">
    <property type="GO annotations" value="0 GO annotations based on evolutionary models"/>
</dbReference>
<dbReference type="PhylomeDB" id="Q17R55"/>
<dbReference type="TreeFam" id="TF332178"/>
<dbReference type="PathwayCommons" id="Q17R55"/>
<dbReference type="SignaLink" id="Q17R55"/>
<dbReference type="BioGRID-ORCS" id="148109">
    <property type="hits" value="17 hits in 1140 CRISPR screens"/>
</dbReference>
<dbReference type="GenomeRNAi" id="148109"/>
<dbReference type="Pharos" id="Q17R55">
    <property type="development level" value="Tdark"/>
</dbReference>
<dbReference type="PRO" id="PR:Q17R55"/>
<dbReference type="Proteomes" id="UP000005640">
    <property type="component" value="Chromosome 19"/>
</dbReference>
<dbReference type="RNAct" id="Q17R55">
    <property type="molecule type" value="protein"/>
</dbReference>
<dbReference type="Bgee" id="ENSG00000177558">
    <property type="expression patterns" value="Expressed in male germ line stem cell (sensu Vertebrata) in testis and 52 other cell types or tissues"/>
</dbReference>
<dbReference type="GO" id="GO:0016020">
    <property type="term" value="C:membrane"/>
    <property type="evidence" value="ECO:0007669"/>
    <property type="project" value="UniProtKB-SubCell"/>
</dbReference>
<dbReference type="Gene3D" id="2.60.40.10">
    <property type="entry name" value="Immunoglobulins"/>
    <property type="match status" value="1"/>
</dbReference>
<dbReference type="InterPro" id="IPR039311">
    <property type="entry name" value="FAM187A/B"/>
</dbReference>
<dbReference type="InterPro" id="IPR036179">
    <property type="entry name" value="Ig-like_dom_sf"/>
</dbReference>
<dbReference type="InterPro" id="IPR013783">
    <property type="entry name" value="Ig-like_fold"/>
</dbReference>
<dbReference type="PANTHER" id="PTHR32178">
    <property type="entry name" value="FAM187"/>
    <property type="match status" value="1"/>
</dbReference>
<dbReference type="PANTHER" id="PTHR32178:SF8">
    <property type="entry name" value="PROTEIN FAM187B"/>
    <property type="match status" value="1"/>
</dbReference>
<dbReference type="SUPFAM" id="SSF48726">
    <property type="entry name" value="Immunoglobulin"/>
    <property type="match status" value="1"/>
</dbReference>
<reference key="1">
    <citation type="journal article" date="2004" name="Nat. Genet.">
        <title>Complete sequencing and characterization of 21,243 full-length human cDNAs.</title>
        <authorList>
            <person name="Ota T."/>
            <person name="Suzuki Y."/>
            <person name="Nishikawa T."/>
            <person name="Otsuki T."/>
            <person name="Sugiyama T."/>
            <person name="Irie R."/>
            <person name="Wakamatsu A."/>
            <person name="Hayashi K."/>
            <person name="Sato H."/>
            <person name="Nagai K."/>
            <person name="Kimura K."/>
            <person name="Makita H."/>
            <person name="Sekine M."/>
            <person name="Obayashi M."/>
            <person name="Nishi T."/>
            <person name="Shibahara T."/>
            <person name="Tanaka T."/>
            <person name="Ishii S."/>
            <person name="Yamamoto J."/>
            <person name="Saito K."/>
            <person name="Kawai Y."/>
            <person name="Isono Y."/>
            <person name="Nakamura Y."/>
            <person name="Nagahari K."/>
            <person name="Murakami K."/>
            <person name="Yasuda T."/>
            <person name="Iwayanagi T."/>
            <person name="Wagatsuma M."/>
            <person name="Shiratori A."/>
            <person name="Sudo H."/>
            <person name="Hosoiri T."/>
            <person name="Kaku Y."/>
            <person name="Kodaira H."/>
            <person name="Kondo H."/>
            <person name="Sugawara M."/>
            <person name="Takahashi M."/>
            <person name="Kanda K."/>
            <person name="Yokoi T."/>
            <person name="Furuya T."/>
            <person name="Kikkawa E."/>
            <person name="Omura Y."/>
            <person name="Abe K."/>
            <person name="Kamihara K."/>
            <person name="Katsuta N."/>
            <person name="Sato K."/>
            <person name="Tanikawa M."/>
            <person name="Yamazaki M."/>
            <person name="Ninomiya K."/>
            <person name="Ishibashi T."/>
            <person name="Yamashita H."/>
            <person name="Murakawa K."/>
            <person name="Fujimori K."/>
            <person name="Tanai H."/>
            <person name="Kimata M."/>
            <person name="Watanabe M."/>
            <person name="Hiraoka S."/>
            <person name="Chiba Y."/>
            <person name="Ishida S."/>
            <person name="Ono Y."/>
            <person name="Takiguchi S."/>
            <person name="Watanabe S."/>
            <person name="Yosida M."/>
            <person name="Hotuta T."/>
            <person name="Kusano J."/>
            <person name="Kanehori K."/>
            <person name="Takahashi-Fujii A."/>
            <person name="Hara H."/>
            <person name="Tanase T.-O."/>
            <person name="Nomura Y."/>
            <person name="Togiya S."/>
            <person name="Komai F."/>
            <person name="Hara R."/>
            <person name="Takeuchi K."/>
            <person name="Arita M."/>
            <person name="Imose N."/>
            <person name="Musashino K."/>
            <person name="Yuuki H."/>
            <person name="Oshima A."/>
            <person name="Sasaki N."/>
            <person name="Aotsuka S."/>
            <person name="Yoshikawa Y."/>
            <person name="Matsunawa H."/>
            <person name="Ichihara T."/>
            <person name="Shiohata N."/>
            <person name="Sano S."/>
            <person name="Moriya S."/>
            <person name="Momiyama H."/>
            <person name="Satoh N."/>
            <person name="Takami S."/>
            <person name="Terashima Y."/>
            <person name="Suzuki O."/>
            <person name="Nakagawa S."/>
            <person name="Senoh A."/>
            <person name="Mizoguchi H."/>
            <person name="Goto Y."/>
            <person name="Shimizu F."/>
            <person name="Wakebe H."/>
            <person name="Hishigaki H."/>
            <person name="Watanabe T."/>
            <person name="Sugiyama A."/>
            <person name="Takemoto M."/>
            <person name="Kawakami B."/>
            <person name="Yamazaki M."/>
            <person name="Watanabe K."/>
            <person name="Kumagai A."/>
            <person name="Itakura S."/>
            <person name="Fukuzumi Y."/>
            <person name="Fujimori Y."/>
            <person name="Komiyama M."/>
            <person name="Tashiro H."/>
            <person name="Tanigami A."/>
            <person name="Fujiwara T."/>
            <person name="Ono T."/>
            <person name="Yamada K."/>
            <person name="Fujii Y."/>
            <person name="Ozaki K."/>
            <person name="Hirao M."/>
            <person name="Ohmori Y."/>
            <person name="Kawabata A."/>
            <person name="Hikiji T."/>
            <person name="Kobatake N."/>
            <person name="Inagaki H."/>
            <person name="Ikema Y."/>
            <person name="Okamoto S."/>
            <person name="Okitani R."/>
            <person name="Kawakami T."/>
            <person name="Noguchi S."/>
            <person name="Itoh T."/>
            <person name="Shigeta K."/>
            <person name="Senba T."/>
            <person name="Matsumura K."/>
            <person name="Nakajima Y."/>
            <person name="Mizuno T."/>
            <person name="Morinaga M."/>
            <person name="Sasaki M."/>
            <person name="Togashi T."/>
            <person name="Oyama M."/>
            <person name="Hata H."/>
            <person name="Watanabe M."/>
            <person name="Komatsu T."/>
            <person name="Mizushima-Sugano J."/>
            <person name="Satoh T."/>
            <person name="Shirai Y."/>
            <person name="Takahashi Y."/>
            <person name="Nakagawa K."/>
            <person name="Okumura K."/>
            <person name="Nagase T."/>
            <person name="Nomura N."/>
            <person name="Kikuchi H."/>
            <person name="Masuho Y."/>
            <person name="Yamashita R."/>
            <person name="Nakai K."/>
            <person name="Yada T."/>
            <person name="Nakamura Y."/>
            <person name="Ohara O."/>
            <person name="Isogai T."/>
            <person name="Sugano S."/>
        </authorList>
    </citation>
    <scope>NUCLEOTIDE SEQUENCE [LARGE SCALE MRNA]</scope>
    <scope>VARIANT ARG-160</scope>
    <source>
        <tissue>Testis</tissue>
    </source>
</reference>
<reference key="2">
    <citation type="journal article" date="2004" name="Genome Res.">
        <title>The status, quality, and expansion of the NIH full-length cDNA project: the Mammalian Gene Collection (MGC).</title>
        <authorList>
            <consortium name="The MGC Project Team"/>
        </authorList>
    </citation>
    <scope>NUCLEOTIDE SEQUENCE [LARGE SCALE MRNA]</scope>
    <scope>VARIANT SER-3</scope>
    <source>
        <tissue>Brain</tissue>
    </source>
</reference>
<evidence type="ECO:0000255" key="1"/>
<evidence type="ECO:0000269" key="2">
    <source>
    </source>
</evidence>
<evidence type="ECO:0000269" key="3">
    <source>
    </source>
</evidence>
<evidence type="ECO:0000305" key="4"/>
<organism>
    <name type="scientific">Homo sapiens</name>
    <name type="common">Human</name>
    <dbReference type="NCBI Taxonomy" id="9606"/>
    <lineage>
        <taxon>Eukaryota</taxon>
        <taxon>Metazoa</taxon>
        <taxon>Chordata</taxon>
        <taxon>Craniata</taxon>
        <taxon>Vertebrata</taxon>
        <taxon>Euteleostomi</taxon>
        <taxon>Mammalia</taxon>
        <taxon>Eutheria</taxon>
        <taxon>Euarchontoglires</taxon>
        <taxon>Primates</taxon>
        <taxon>Haplorrhini</taxon>
        <taxon>Catarrhini</taxon>
        <taxon>Hominidae</taxon>
        <taxon>Homo</taxon>
    </lineage>
</organism>
<name>F187B_HUMAN</name>
<comment type="subcellular location">
    <subcellularLocation>
        <location evidence="4">Membrane</location>
        <topology evidence="4">Single-pass type I membrane protein</topology>
    </subcellularLocation>
</comment>
<comment type="similarity">
    <text evidence="4">Belongs to the FAM187 family.</text>
</comment>
<protein>
    <recommendedName>
        <fullName>Protein FAM187B</fullName>
    </recommendedName>
    <alternativeName>
        <fullName>Transmembrane protein 162</fullName>
    </alternativeName>
</protein>